<comment type="function">
    <text evidence="1">Catalyzes the formation of cytosolic acetyl-CoA, which is mainly used for the biosynthesis of fatty acids and sterols.</text>
</comment>
<comment type="catalytic activity">
    <reaction>
        <text>oxaloacetate + acetyl-CoA + ADP + phosphate = citrate + ATP + CoA</text>
        <dbReference type="Rhea" id="RHEA:21160"/>
        <dbReference type="ChEBI" id="CHEBI:16452"/>
        <dbReference type="ChEBI" id="CHEBI:16947"/>
        <dbReference type="ChEBI" id="CHEBI:30616"/>
        <dbReference type="ChEBI" id="CHEBI:43474"/>
        <dbReference type="ChEBI" id="CHEBI:57287"/>
        <dbReference type="ChEBI" id="CHEBI:57288"/>
        <dbReference type="ChEBI" id="CHEBI:456216"/>
        <dbReference type="EC" id="2.3.3.8"/>
    </reaction>
</comment>
<comment type="subunit">
    <text evidence="1">Composed of two subunits.</text>
</comment>
<comment type="subcellular location">
    <subcellularLocation>
        <location evidence="1">Cytoplasm</location>
    </subcellularLocation>
</comment>
<comment type="similarity">
    <text evidence="4">Belongs to the succinate/malate CoA ligase alpha subunit family.</text>
</comment>
<accession>Q8X097</accession>
<accession>Q7SCH6</accession>
<sequence>MPSATTASTNGANGASASPAPGNLSANDNIRRFAAPSRPLSPLPAHALFNDKTRCFVYGLQPRAVQGMLDFDFICKRSTPSVAGIIYTFGGQFVSKMYWGTSETLLPVYQEVPKAIAKHPDVDVVVNFASSRSVYSSTMELMEYPQIKTIAIIAEGVPERRAREIAYVAKKKGITIIGPATVGGIKPGCFKIGNTGGMMDNIVASKLYRKGSVGYVSKSGGMSNELNNIISQTTDGVYEGVAIGGDRYPGTTFIDHLLRYQADPDCKILVLLGEVGGVEEYKVIDAVKQGIITKPIVAWAIGTCASMFKTEVQFGHAGAFANSQLETAATKNKSMREAGFYVPDTFEDMPALLKQVYDKLVADGTIVPAPEPVVPKIPIDYSWAQELGLIRKPAAFISTISDDRGQELLYAGMPISDVFKEEIGIGGVMSLLWFRRRLPDYAAKFLEMVLMLTADHGPAVSGAMNTIITTRAGKDLISSLVAGLLTIGSRFGGALDGAAEEFTKAFDKGLSPREFVDTMRKQNKLIPGIGHRVKSRNNPDLRVELVKEYVKAKFPSTKLLDYALAVESVTTSKKDNLILNVDGCIAVCFVDLLRNCGAFSTEEAEDYLSMGVLNGLFVLGRSIGLIAHYLDQKRLRTGLYRHPWDDITYLLPSLQQPGPPGTEGRVEVQI</sequence>
<evidence type="ECO:0000250" key="1"/>
<evidence type="ECO:0000255" key="2"/>
<evidence type="ECO:0000256" key="3">
    <source>
        <dbReference type="SAM" id="MobiDB-lite"/>
    </source>
</evidence>
<evidence type="ECO:0000305" key="4"/>
<feature type="chain" id="PRO_0000102785" description="Probable ATP-citrate synthase subunit 1">
    <location>
        <begin position="1"/>
        <end position="670"/>
    </location>
</feature>
<feature type="region of interest" description="Disordered" evidence="3">
    <location>
        <begin position="1"/>
        <end position="22"/>
    </location>
</feature>
<feature type="active site" description="Tele-phosphohistidine intermediate" evidence="1">
    <location>
        <position position="316"/>
    </location>
</feature>
<feature type="binding site" evidence="1">
    <location>
        <begin position="257"/>
        <end position="277"/>
    </location>
    <ligand>
        <name>ATP</name>
        <dbReference type="ChEBI" id="CHEBI:30616"/>
    </ligand>
</feature>
<feature type="binding site" evidence="1">
    <location>
        <position position="274"/>
    </location>
    <ligand>
        <name>Mg(2+)</name>
        <dbReference type="ChEBI" id="CHEBI:18420"/>
    </ligand>
</feature>
<feature type="binding site" evidence="1">
    <location>
        <begin position="308"/>
        <end position="334"/>
    </location>
    <ligand>
        <name>ATP</name>
        <dbReference type="ChEBI" id="CHEBI:30616"/>
    </ligand>
</feature>
<feature type="binding site" evidence="2">
    <location>
        <begin position="335"/>
        <end position="345"/>
    </location>
    <ligand>
        <name>CoA</name>
        <dbReference type="ChEBI" id="CHEBI:57287"/>
    </ligand>
</feature>
<keyword id="KW-0067">ATP-binding</keyword>
<keyword id="KW-0963">Cytoplasm</keyword>
<keyword id="KW-0444">Lipid biosynthesis</keyword>
<keyword id="KW-0443">Lipid metabolism</keyword>
<keyword id="KW-0460">Magnesium</keyword>
<keyword id="KW-0479">Metal-binding</keyword>
<keyword id="KW-0547">Nucleotide-binding</keyword>
<keyword id="KW-0597">Phosphoprotein</keyword>
<keyword id="KW-1185">Reference proteome</keyword>
<keyword id="KW-0808">Transferase</keyword>
<name>ACL1_NEUCR</name>
<proteinExistence type="inferred from homology"/>
<gene>
    <name type="ORF">B14D6.310</name>
    <name type="ORF">NCU06785</name>
</gene>
<protein>
    <recommendedName>
        <fullName>Probable ATP-citrate synthase subunit 1</fullName>
        <ecNumber>2.3.3.8</ecNumber>
    </recommendedName>
    <alternativeName>
        <fullName>ATP-citrate (pro-S-)-lyase 1</fullName>
    </alternativeName>
    <alternativeName>
        <fullName>Citrate cleavage enzyme subunit 1</fullName>
    </alternativeName>
</protein>
<dbReference type="EC" id="2.3.3.8"/>
<dbReference type="EMBL" id="AL356173">
    <property type="protein sequence ID" value="CAB91740.2"/>
    <property type="molecule type" value="Genomic_DNA"/>
</dbReference>
<dbReference type="EMBL" id="CM002237">
    <property type="protein sequence ID" value="EAA34390.1"/>
    <property type="molecule type" value="Genomic_DNA"/>
</dbReference>
<dbReference type="RefSeq" id="XP_963626.1">
    <property type="nucleotide sequence ID" value="XM_958533.3"/>
</dbReference>
<dbReference type="SMR" id="Q8X097"/>
<dbReference type="STRING" id="367110.Q8X097"/>
<dbReference type="PaxDb" id="5141-EFNCRP00000006852"/>
<dbReference type="EnsemblFungi" id="EAA34390">
    <property type="protein sequence ID" value="EAA34390"/>
    <property type="gene ID" value="NCU06785"/>
</dbReference>
<dbReference type="GeneID" id="3879766"/>
<dbReference type="KEGG" id="ncr:NCU06785"/>
<dbReference type="VEuPathDB" id="FungiDB:NCU06785"/>
<dbReference type="HOGENOM" id="CLU_006587_4_1_1"/>
<dbReference type="InParanoid" id="Q8X097"/>
<dbReference type="OMA" id="HMLRYQA"/>
<dbReference type="OrthoDB" id="3261737at2759"/>
<dbReference type="Proteomes" id="UP000001805">
    <property type="component" value="Chromosome 6, Linkage Group II"/>
</dbReference>
<dbReference type="GO" id="GO:0005829">
    <property type="term" value="C:cytosol"/>
    <property type="evidence" value="ECO:0000318"/>
    <property type="project" value="GO_Central"/>
</dbReference>
<dbReference type="GO" id="GO:0005524">
    <property type="term" value="F:ATP binding"/>
    <property type="evidence" value="ECO:0007669"/>
    <property type="project" value="UniProtKB-KW"/>
</dbReference>
<dbReference type="GO" id="GO:0003878">
    <property type="term" value="F:ATP citrate synthase activity"/>
    <property type="evidence" value="ECO:0000318"/>
    <property type="project" value="GO_Central"/>
</dbReference>
<dbReference type="GO" id="GO:0046872">
    <property type="term" value="F:metal ion binding"/>
    <property type="evidence" value="ECO:0007669"/>
    <property type="project" value="UniProtKB-KW"/>
</dbReference>
<dbReference type="GO" id="GO:0006085">
    <property type="term" value="P:acetyl-CoA biosynthetic process"/>
    <property type="evidence" value="ECO:0000318"/>
    <property type="project" value="GO_Central"/>
</dbReference>
<dbReference type="GO" id="GO:0006633">
    <property type="term" value="P:fatty acid biosynthetic process"/>
    <property type="evidence" value="ECO:0000318"/>
    <property type="project" value="GO_Central"/>
</dbReference>
<dbReference type="CDD" id="cd06100">
    <property type="entry name" value="CCL_ACL-C"/>
    <property type="match status" value="1"/>
</dbReference>
<dbReference type="FunFam" id="3.40.50.261:FF:000003">
    <property type="entry name" value="ATP-citrate synthase subunit"/>
    <property type="match status" value="1"/>
</dbReference>
<dbReference type="FunFam" id="1.10.230.10:FF:000005">
    <property type="entry name" value="ATP-citrate synthase subunit 1"/>
    <property type="match status" value="1"/>
</dbReference>
<dbReference type="FunFam" id="3.40.50.720:FF:000024">
    <property type="entry name" value="Probable ATP-citrate synthase"/>
    <property type="match status" value="1"/>
</dbReference>
<dbReference type="Gene3D" id="1.10.230.10">
    <property type="entry name" value="Cytochrome P450-Terp, domain 2"/>
    <property type="match status" value="1"/>
</dbReference>
<dbReference type="Gene3D" id="3.40.50.720">
    <property type="entry name" value="NAD(P)-binding Rossmann-like Domain"/>
    <property type="match status" value="1"/>
</dbReference>
<dbReference type="Gene3D" id="3.40.50.261">
    <property type="entry name" value="Succinyl-CoA synthetase domains"/>
    <property type="match status" value="1"/>
</dbReference>
<dbReference type="InterPro" id="IPR017440">
    <property type="entry name" value="Cit_synth/succinyl-CoA_lig_AS"/>
</dbReference>
<dbReference type="InterPro" id="IPR016143">
    <property type="entry name" value="Citrate_synth-like_sm_a-sub"/>
</dbReference>
<dbReference type="InterPro" id="IPR002020">
    <property type="entry name" value="Citrate_synthase"/>
</dbReference>
<dbReference type="InterPro" id="IPR036969">
    <property type="entry name" value="Citrate_synthase_sf"/>
</dbReference>
<dbReference type="InterPro" id="IPR033847">
    <property type="entry name" value="Citrt_syn/SCS-alpha_CS"/>
</dbReference>
<dbReference type="InterPro" id="IPR003781">
    <property type="entry name" value="CoA-bd"/>
</dbReference>
<dbReference type="InterPro" id="IPR036291">
    <property type="entry name" value="NAD(P)-bd_dom_sf"/>
</dbReference>
<dbReference type="InterPro" id="IPR017866">
    <property type="entry name" value="Succ-CoA_synthase_bsu_CS"/>
</dbReference>
<dbReference type="InterPro" id="IPR005811">
    <property type="entry name" value="SUCC_ACL_C"/>
</dbReference>
<dbReference type="InterPro" id="IPR016102">
    <property type="entry name" value="Succinyl-CoA_synth-like"/>
</dbReference>
<dbReference type="PANTHER" id="PTHR23118">
    <property type="entry name" value="ATP-CITRATE SYNTHASE"/>
    <property type="match status" value="1"/>
</dbReference>
<dbReference type="PANTHER" id="PTHR23118:SF42">
    <property type="entry name" value="ATP-CITRATE SYNTHASE"/>
    <property type="match status" value="1"/>
</dbReference>
<dbReference type="Pfam" id="PF00285">
    <property type="entry name" value="Citrate_synt"/>
    <property type="match status" value="1"/>
</dbReference>
<dbReference type="Pfam" id="PF02629">
    <property type="entry name" value="CoA_binding"/>
    <property type="match status" value="1"/>
</dbReference>
<dbReference type="Pfam" id="PF00549">
    <property type="entry name" value="Ligase_CoA"/>
    <property type="match status" value="1"/>
</dbReference>
<dbReference type="PRINTS" id="PR01798">
    <property type="entry name" value="SCOASYNTHASE"/>
</dbReference>
<dbReference type="SMART" id="SM00881">
    <property type="entry name" value="CoA_binding"/>
    <property type="match status" value="1"/>
</dbReference>
<dbReference type="SUPFAM" id="SSF48256">
    <property type="entry name" value="Citrate synthase"/>
    <property type="match status" value="1"/>
</dbReference>
<dbReference type="SUPFAM" id="SSF51735">
    <property type="entry name" value="NAD(P)-binding Rossmann-fold domains"/>
    <property type="match status" value="1"/>
</dbReference>
<dbReference type="PROSITE" id="PS01216">
    <property type="entry name" value="SUCCINYL_COA_LIG_1"/>
    <property type="match status" value="1"/>
</dbReference>
<dbReference type="PROSITE" id="PS00399">
    <property type="entry name" value="SUCCINYL_COA_LIG_2"/>
    <property type="match status" value="1"/>
</dbReference>
<dbReference type="PROSITE" id="PS01217">
    <property type="entry name" value="SUCCINYL_COA_LIG_3"/>
    <property type="match status" value="1"/>
</dbReference>
<reference key="1">
    <citation type="journal article" date="2003" name="Nucleic Acids Res.">
        <title>What's in the genome of a filamentous fungus? Analysis of the Neurospora genome sequence.</title>
        <authorList>
            <person name="Mannhaupt G."/>
            <person name="Montrone C."/>
            <person name="Haase D."/>
            <person name="Mewes H.-W."/>
            <person name="Aign V."/>
            <person name="Hoheisel J.D."/>
            <person name="Fartmann B."/>
            <person name="Nyakatura G."/>
            <person name="Kempken F."/>
            <person name="Maier J."/>
            <person name="Schulte U."/>
        </authorList>
    </citation>
    <scope>NUCLEOTIDE SEQUENCE [LARGE SCALE GENOMIC DNA]</scope>
    <source>
        <strain>ATCC 24698 / 74-OR23-1A / CBS 708.71 / DSM 1257 / FGSC 987</strain>
    </source>
</reference>
<reference key="2">
    <citation type="journal article" date="2003" name="Nature">
        <title>The genome sequence of the filamentous fungus Neurospora crassa.</title>
        <authorList>
            <person name="Galagan J.E."/>
            <person name="Calvo S.E."/>
            <person name="Borkovich K.A."/>
            <person name="Selker E.U."/>
            <person name="Read N.D."/>
            <person name="Jaffe D.B."/>
            <person name="FitzHugh W."/>
            <person name="Ma L.-J."/>
            <person name="Smirnov S."/>
            <person name="Purcell S."/>
            <person name="Rehman B."/>
            <person name="Elkins T."/>
            <person name="Engels R."/>
            <person name="Wang S."/>
            <person name="Nielsen C.B."/>
            <person name="Butler J."/>
            <person name="Endrizzi M."/>
            <person name="Qui D."/>
            <person name="Ianakiev P."/>
            <person name="Bell-Pedersen D."/>
            <person name="Nelson M.A."/>
            <person name="Werner-Washburne M."/>
            <person name="Selitrennikoff C.P."/>
            <person name="Kinsey J.A."/>
            <person name="Braun E.L."/>
            <person name="Zelter A."/>
            <person name="Schulte U."/>
            <person name="Kothe G.O."/>
            <person name="Jedd G."/>
            <person name="Mewes H.-W."/>
            <person name="Staben C."/>
            <person name="Marcotte E."/>
            <person name="Greenberg D."/>
            <person name="Roy A."/>
            <person name="Foley K."/>
            <person name="Naylor J."/>
            <person name="Stange-Thomann N."/>
            <person name="Barrett R."/>
            <person name="Gnerre S."/>
            <person name="Kamal M."/>
            <person name="Kamvysselis M."/>
            <person name="Mauceli E.W."/>
            <person name="Bielke C."/>
            <person name="Rudd S."/>
            <person name="Frishman D."/>
            <person name="Krystofova S."/>
            <person name="Rasmussen C."/>
            <person name="Metzenberg R.L."/>
            <person name="Perkins D.D."/>
            <person name="Kroken S."/>
            <person name="Cogoni C."/>
            <person name="Macino G."/>
            <person name="Catcheside D.E.A."/>
            <person name="Li W."/>
            <person name="Pratt R.J."/>
            <person name="Osmani S.A."/>
            <person name="DeSouza C.P.C."/>
            <person name="Glass N.L."/>
            <person name="Orbach M.J."/>
            <person name="Berglund J.A."/>
            <person name="Voelker R."/>
            <person name="Yarden O."/>
            <person name="Plamann M."/>
            <person name="Seiler S."/>
            <person name="Dunlap J.C."/>
            <person name="Radford A."/>
            <person name="Aramayo R."/>
            <person name="Natvig D.O."/>
            <person name="Alex L.A."/>
            <person name="Mannhaupt G."/>
            <person name="Ebbole D.J."/>
            <person name="Freitag M."/>
            <person name="Paulsen I."/>
            <person name="Sachs M.S."/>
            <person name="Lander E.S."/>
            <person name="Nusbaum C."/>
            <person name="Birren B.W."/>
        </authorList>
    </citation>
    <scope>NUCLEOTIDE SEQUENCE [LARGE SCALE GENOMIC DNA]</scope>
    <source>
        <strain>ATCC 24698 / 74-OR23-1A / CBS 708.71 / DSM 1257 / FGSC 987</strain>
    </source>
</reference>
<organism>
    <name type="scientific">Neurospora crassa (strain ATCC 24698 / 74-OR23-1A / CBS 708.71 / DSM 1257 / FGSC 987)</name>
    <dbReference type="NCBI Taxonomy" id="367110"/>
    <lineage>
        <taxon>Eukaryota</taxon>
        <taxon>Fungi</taxon>
        <taxon>Dikarya</taxon>
        <taxon>Ascomycota</taxon>
        <taxon>Pezizomycotina</taxon>
        <taxon>Sordariomycetes</taxon>
        <taxon>Sordariomycetidae</taxon>
        <taxon>Sordariales</taxon>
        <taxon>Sordariaceae</taxon>
        <taxon>Neurospora</taxon>
    </lineage>
</organism>